<accession>A2BJP9</accession>
<reference key="1">
    <citation type="journal article" date="2007" name="Archaea">
        <title>The genome of Hyperthermus butylicus: a sulfur-reducing, peptide fermenting, neutrophilic Crenarchaeote growing up to 108 degrees C.</title>
        <authorList>
            <person name="Bruegger K."/>
            <person name="Chen L."/>
            <person name="Stark M."/>
            <person name="Zibat A."/>
            <person name="Redder P."/>
            <person name="Ruepp A."/>
            <person name="Awayez M."/>
            <person name="She Q."/>
            <person name="Garrett R.A."/>
            <person name="Klenk H.-P."/>
        </authorList>
    </citation>
    <scope>NUCLEOTIDE SEQUENCE [LARGE SCALE GENOMIC DNA]</scope>
    <source>
        <strain>DSM 5456 / JCM 9403 / PLM1-5</strain>
    </source>
</reference>
<keyword id="KW-0067">ATP-binding</keyword>
<keyword id="KW-0547">Nucleotide-binding</keyword>
<keyword id="KW-1185">Reference proteome</keyword>
<sequence length="186" mass="20544">MSGAHRLIILVAGMPGSGKSVLSSIARSMGIPVYVMGDIVREEARRRGIEPTPENLNRLARLLREEHGSTVVAERTASKIASDDHSIVLVDGVRSLDEVAVFEKLGKTVIVAVHASPRTRFERIRRRGRPGDPTTWEEFRQRDLTELGFGLGNVIALADYMLVNELSLEEFEAEAKRLLSRLTGQG</sequence>
<protein>
    <recommendedName>
        <fullName evidence="1">UPF0200 protein Hbut_0338</fullName>
    </recommendedName>
</protein>
<comment type="similarity">
    <text evidence="1">Belongs to the UPF0200 family.</text>
</comment>
<organism>
    <name type="scientific">Hyperthermus butylicus (strain DSM 5456 / JCM 9403 / PLM1-5)</name>
    <dbReference type="NCBI Taxonomy" id="415426"/>
    <lineage>
        <taxon>Archaea</taxon>
        <taxon>Thermoproteota</taxon>
        <taxon>Thermoprotei</taxon>
        <taxon>Desulfurococcales</taxon>
        <taxon>Pyrodictiaceae</taxon>
        <taxon>Hyperthermus</taxon>
    </lineage>
</organism>
<proteinExistence type="inferred from homology"/>
<name>Y338_HYPBU</name>
<dbReference type="EMBL" id="CP000493">
    <property type="protein sequence ID" value="ABM80210.1"/>
    <property type="molecule type" value="Genomic_DNA"/>
</dbReference>
<dbReference type="RefSeq" id="WP_011821528.1">
    <property type="nucleotide sequence ID" value="NC_008818.1"/>
</dbReference>
<dbReference type="SMR" id="A2BJP9"/>
<dbReference type="STRING" id="415426.Hbut_0338"/>
<dbReference type="EnsemblBacteria" id="ABM80210">
    <property type="protein sequence ID" value="ABM80210"/>
    <property type="gene ID" value="Hbut_0338"/>
</dbReference>
<dbReference type="GeneID" id="4782540"/>
<dbReference type="KEGG" id="hbu:Hbut_0338"/>
<dbReference type="eggNOG" id="arCOG01045">
    <property type="taxonomic scope" value="Archaea"/>
</dbReference>
<dbReference type="HOGENOM" id="CLU_096329_1_0_2"/>
<dbReference type="OrthoDB" id="85381at2157"/>
<dbReference type="Proteomes" id="UP000002593">
    <property type="component" value="Chromosome"/>
</dbReference>
<dbReference type="GO" id="GO:0005524">
    <property type="term" value="F:ATP binding"/>
    <property type="evidence" value="ECO:0007669"/>
    <property type="project" value="UniProtKB-UniRule"/>
</dbReference>
<dbReference type="Gene3D" id="3.40.50.300">
    <property type="entry name" value="P-loop containing nucleotide triphosphate hydrolases"/>
    <property type="match status" value="1"/>
</dbReference>
<dbReference type="HAMAP" id="MF_01111">
    <property type="entry name" value="UPF0200"/>
    <property type="match status" value="1"/>
</dbReference>
<dbReference type="InterPro" id="IPR022970">
    <property type="entry name" value="NTP_hydrolase-rel"/>
</dbReference>
<dbReference type="InterPro" id="IPR027417">
    <property type="entry name" value="P-loop_NTPase"/>
</dbReference>
<dbReference type="PANTHER" id="PTHR41930:SF1">
    <property type="entry name" value="DEPHOSPHO-COA KINASE"/>
    <property type="match status" value="1"/>
</dbReference>
<dbReference type="PANTHER" id="PTHR41930">
    <property type="entry name" value="UPF0200 PROTEIN MJ1399"/>
    <property type="match status" value="1"/>
</dbReference>
<dbReference type="Pfam" id="PF13207">
    <property type="entry name" value="AAA_17"/>
    <property type="match status" value="1"/>
</dbReference>
<dbReference type="SUPFAM" id="SSF52540">
    <property type="entry name" value="P-loop containing nucleoside triphosphate hydrolases"/>
    <property type="match status" value="1"/>
</dbReference>
<gene>
    <name type="ordered locus">Hbut_0338</name>
</gene>
<evidence type="ECO:0000255" key="1">
    <source>
        <dbReference type="HAMAP-Rule" id="MF_01111"/>
    </source>
</evidence>
<feature type="chain" id="PRO_1000065147" description="UPF0200 protein Hbut_0338">
    <location>
        <begin position="1"/>
        <end position="186"/>
    </location>
</feature>
<feature type="binding site" evidence="1">
    <location>
        <begin position="13"/>
        <end position="20"/>
    </location>
    <ligand>
        <name>ATP</name>
        <dbReference type="ChEBI" id="CHEBI:30616"/>
    </ligand>
</feature>